<feature type="chain" id="PRO_0000074456" description="Ion-translocating oxidoreductase complex subunit D">
    <location>
        <begin position="1"/>
        <end position="358"/>
    </location>
</feature>
<feature type="transmembrane region" description="Helical" evidence="1">
    <location>
        <begin position="24"/>
        <end position="44"/>
    </location>
</feature>
<feature type="transmembrane region" description="Helical" evidence="1">
    <location>
        <begin position="79"/>
        <end position="99"/>
    </location>
</feature>
<feature type="transmembrane region" description="Helical" evidence="1">
    <location>
        <begin position="125"/>
        <end position="145"/>
    </location>
</feature>
<feature type="transmembrane region" description="Helical" evidence="1">
    <location>
        <begin position="220"/>
        <end position="240"/>
    </location>
</feature>
<feature type="transmembrane region" description="Helical" evidence="1">
    <location>
        <begin position="248"/>
        <end position="268"/>
    </location>
</feature>
<feature type="transmembrane region" description="Helical" evidence="1">
    <location>
        <begin position="271"/>
        <end position="291"/>
    </location>
</feature>
<feature type="transmembrane region" description="Helical" evidence="1">
    <location>
        <begin position="297"/>
        <end position="317"/>
    </location>
</feature>
<feature type="transmembrane region" description="Helical" evidence="1">
    <location>
        <begin position="321"/>
        <end position="341"/>
    </location>
</feature>
<feature type="modified residue" description="FMN phosphoryl threonine" evidence="1">
    <location>
        <position position="186"/>
    </location>
</feature>
<accession>Q57288</accession>
<accession>O05080</accession>
<comment type="function">
    <text evidence="1">Part of a membrane-bound complex that couples electron transfer with translocation of ions across the membrane.</text>
</comment>
<comment type="cofactor">
    <cofactor evidence="1">
        <name>FMN</name>
        <dbReference type="ChEBI" id="CHEBI:58210"/>
    </cofactor>
</comment>
<comment type="subunit">
    <text evidence="1">The complex is composed of six subunits: RnfA, RnfB, RnfC, RnfD, RnfE and RnfG.</text>
</comment>
<comment type="subcellular location">
    <subcellularLocation>
        <location evidence="1">Cell inner membrane</location>
        <topology evidence="1">Multi-pass membrane protein</topology>
    </subcellularLocation>
</comment>
<comment type="similarity">
    <text evidence="1">Belongs to the NqrB/RnfD family.</text>
</comment>
<gene>
    <name evidence="1" type="primary">rnfD</name>
    <name type="ordered locus">HI_1686</name>
</gene>
<sequence length="358" mass="39358">MFKMVSSPHTHSGKLTAHIMLWAILAMMPAFFTQIYYFGFGVVLQSALAIGTAIIAEFIAIKLRGKKPLNYLSDFSVALTALILAMAIPPYAPYWIIIIGTLCAVLLGKQVYGGLGQNPFNPAMIGYVILLISFPLQMTTWMPPINLLQEPPTFSDAFSLIFSGLTTDGFTLSQLTHNIDGITQATPLDSAKIFYKSHTQLNDFYELIKLPIFMGNGTDFAQGWWQINVAFLAGGIFLILKRVIHWQIPVAMLVTFFCLATATAFTGFTHLSAISQLVSGAMMFGAFFIATDPVTASITPRGKIIFGALVGLFVYLIRYHGNYPDGVAFAILLSNICVPLIDHYTRPRVSGYPTKGRK</sequence>
<proteinExistence type="inferred from homology"/>
<evidence type="ECO:0000255" key="1">
    <source>
        <dbReference type="HAMAP-Rule" id="MF_00462"/>
    </source>
</evidence>
<name>RNFD_HAEIN</name>
<organism>
    <name type="scientific">Haemophilus influenzae (strain ATCC 51907 / DSM 11121 / KW20 / Rd)</name>
    <dbReference type="NCBI Taxonomy" id="71421"/>
    <lineage>
        <taxon>Bacteria</taxon>
        <taxon>Pseudomonadati</taxon>
        <taxon>Pseudomonadota</taxon>
        <taxon>Gammaproteobacteria</taxon>
        <taxon>Pasteurellales</taxon>
        <taxon>Pasteurellaceae</taxon>
        <taxon>Haemophilus</taxon>
    </lineage>
</organism>
<protein>
    <recommendedName>
        <fullName evidence="1">Ion-translocating oxidoreductase complex subunit D</fullName>
        <ecNumber evidence="1">7.-.-.-</ecNumber>
    </recommendedName>
    <alternativeName>
        <fullName evidence="1">Rnf electron transport complex subunit D</fullName>
    </alternativeName>
</protein>
<keyword id="KW-0997">Cell inner membrane</keyword>
<keyword id="KW-1003">Cell membrane</keyword>
<keyword id="KW-0249">Electron transport</keyword>
<keyword id="KW-0285">Flavoprotein</keyword>
<keyword id="KW-0288">FMN</keyword>
<keyword id="KW-0472">Membrane</keyword>
<keyword id="KW-0597">Phosphoprotein</keyword>
<keyword id="KW-1185">Reference proteome</keyword>
<keyword id="KW-1278">Translocase</keyword>
<keyword id="KW-0812">Transmembrane</keyword>
<keyword id="KW-1133">Transmembrane helix</keyword>
<keyword id="KW-0813">Transport</keyword>
<dbReference type="EC" id="7.-.-.-" evidence="1"/>
<dbReference type="EMBL" id="L42023">
    <property type="protein sequence ID" value="AAC23332.1"/>
    <property type="molecule type" value="Genomic_DNA"/>
</dbReference>
<dbReference type="PIR" id="F64136">
    <property type="entry name" value="F64136"/>
</dbReference>
<dbReference type="RefSeq" id="NP_439828.1">
    <property type="nucleotide sequence ID" value="NC_000907.1"/>
</dbReference>
<dbReference type="SMR" id="Q57288"/>
<dbReference type="STRING" id="71421.HI_1686"/>
<dbReference type="EnsemblBacteria" id="AAC23332">
    <property type="protein sequence ID" value="AAC23332"/>
    <property type="gene ID" value="HI_1686"/>
</dbReference>
<dbReference type="KEGG" id="hin:HI_1686"/>
<dbReference type="PATRIC" id="fig|71421.8.peg.1765"/>
<dbReference type="eggNOG" id="COG4658">
    <property type="taxonomic scope" value="Bacteria"/>
</dbReference>
<dbReference type="HOGENOM" id="CLU_042020_0_0_6"/>
<dbReference type="OrthoDB" id="9776359at2"/>
<dbReference type="PhylomeDB" id="Q57288"/>
<dbReference type="BioCyc" id="HINF71421:G1GJ1-1702-MONOMER"/>
<dbReference type="Proteomes" id="UP000000579">
    <property type="component" value="Chromosome"/>
</dbReference>
<dbReference type="GO" id="GO:0005886">
    <property type="term" value="C:plasma membrane"/>
    <property type="evidence" value="ECO:0000318"/>
    <property type="project" value="GO_Central"/>
</dbReference>
<dbReference type="GO" id="GO:0022900">
    <property type="term" value="P:electron transport chain"/>
    <property type="evidence" value="ECO:0007669"/>
    <property type="project" value="UniProtKB-UniRule"/>
</dbReference>
<dbReference type="GO" id="GO:0055085">
    <property type="term" value="P:transmembrane transport"/>
    <property type="evidence" value="ECO:0007669"/>
    <property type="project" value="InterPro"/>
</dbReference>
<dbReference type="HAMAP" id="MF_00462">
    <property type="entry name" value="RsxD_RnfD"/>
    <property type="match status" value="1"/>
</dbReference>
<dbReference type="InterPro" id="IPR004338">
    <property type="entry name" value="NqrB/RnfD"/>
</dbReference>
<dbReference type="InterPro" id="IPR011303">
    <property type="entry name" value="RnfD_bac"/>
</dbReference>
<dbReference type="NCBIfam" id="NF002011">
    <property type="entry name" value="PRK00816.1"/>
    <property type="match status" value="1"/>
</dbReference>
<dbReference type="NCBIfam" id="TIGR01946">
    <property type="entry name" value="rnfD"/>
    <property type="match status" value="1"/>
</dbReference>
<dbReference type="PANTHER" id="PTHR30578">
    <property type="entry name" value="ELECTRON TRANSPORT COMPLEX PROTEIN RNFD"/>
    <property type="match status" value="1"/>
</dbReference>
<dbReference type="PANTHER" id="PTHR30578:SF0">
    <property type="entry name" value="ION-TRANSLOCATING OXIDOREDUCTASE COMPLEX SUBUNIT D"/>
    <property type="match status" value="1"/>
</dbReference>
<dbReference type="Pfam" id="PF03116">
    <property type="entry name" value="NQR2_RnfD_RnfE"/>
    <property type="match status" value="1"/>
</dbReference>
<reference key="1">
    <citation type="journal article" date="1995" name="Science">
        <title>Whole-genome random sequencing and assembly of Haemophilus influenzae Rd.</title>
        <authorList>
            <person name="Fleischmann R.D."/>
            <person name="Adams M.D."/>
            <person name="White O."/>
            <person name="Clayton R.A."/>
            <person name="Kirkness E.F."/>
            <person name="Kerlavage A.R."/>
            <person name="Bult C.J."/>
            <person name="Tomb J.-F."/>
            <person name="Dougherty B.A."/>
            <person name="Merrick J.M."/>
            <person name="McKenney K."/>
            <person name="Sutton G.G."/>
            <person name="FitzHugh W."/>
            <person name="Fields C.A."/>
            <person name="Gocayne J.D."/>
            <person name="Scott J.D."/>
            <person name="Shirley R."/>
            <person name="Liu L.-I."/>
            <person name="Glodek A."/>
            <person name="Kelley J.M."/>
            <person name="Weidman J.F."/>
            <person name="Phillips C.A."/>
            <person name="Spriggs T."/>
            <person name="Hedblom E."/>
            <person name="Cotton M.D."/>
            <person name="Utterback T.R."/>
            <person name="Hanna M.C."/>
            <person name="Nguyen D.T."/>
            <person name="Saudek D.M."/>
            <person name="Brandon R.C."/>
            <person name="Fine L.D."/>
            <person name="Fritchman J.L."/>
            <person name="Fuhrmann J.L."/>
            <person name="Geoghagen N.S.M."/>
            <person name="Gnehm C.L."/>
            <person name="McDonald L.A."/>
            <person name="Small K.V."/>
            <person name="Fraser C.M."/>
            <person name="Smith H.O."/>
            <person name="Venter J.C."/>
        </authorList>
    </citation>
    <scope>NUCLEOTIDE SEQUENCE [LARGE SCALE GENOMIC DNA]</scope>
    <source>
        <strain>ATCC 51907 / DSM 11121 / KW20 / Rd</strain>
    </source>
</reference>